<reference key="1">
    <citation type="journal article" date="2009" name="Proc. Natl. Acad. Sci. U.S.A.">
        <title>Biogeography of the Sulfolobus islandicus pan-genome.</title>
        <authorList>
            <person name="Reno M.L."/>
            <person name="Held N.L."/>
            <person name="Fields C.J."/>
            <person name="Burke P.V."/>
            <person name="Whitaker R.J."/>
        </authorList>
    </citation>
    <scope>NUCLEOTIDE SEQUENCE [LARGE SCALE GENOMIC DNA]</scope>
    <source>
        <strain>M.16.4 / Kamchatka #3</strain>
    </source>
</reference>
<comment type="similarity">
    <text evidence="1">Belongs to the UPF0215 family.</text>
</comment>
<dbReference type="EMBL" id="CP001402">
    <property type="protein sequence ID" value="ACR42494.1"/>
    <property type="molecule type" value="Genomic_DNA"/>
</dbReference>
<dbReference type="RefSeq" id="WP_012711857.1">
    <property type="nucleotide sequence ID" value="NC_012726.1"/>
</dbReference>
<dbReference type="SMR" id="C4KIT0"/>
<dbReference type="KEGG" id="sid:M164_1891"/>
<dbReference type="HOGENOM" id="CLU_095956_1_1_2"/>
<dbReference type="Proteomes" id="UP000001479">
    <property type="component" value="Chromosome"/>
</dbReference>
<dbReference type="Gene3D" id="3.30.2170.10">
    <property type="entry name" value="archaeoglobus fulgidus dsm 4304 superfamily"/>
    <property type="match status" value="1"/>
</dbReference>
<dbReference type="HAMAP" id="MF_00582">
    <property type="entry name" value="UPF0215"/>
    <property type="match status" value="1"/>
</dbReference>
<dbReference type="InterPro" id="IPR002802">
    <property type="entry name" value="Endo_dU"/>
</dbReference>
<dbReference type="PANTHER" id="PTHR39518">
    <property type="entry name" value="UPF0215 PROTEIN MJ1150"/>
    <property type="match status" value="1"/>
</dbReference>
<dbReference type="PANTHER" id="PTHR39518:SF2">
    <property type="entry name" value="UPF0215 PROTEIN MJ1150"/>
    <property type="match status" value="1"/>
</dbReference>
<dbReference type="Pfam" id="PF01949">
    <property type="entry name" value="DUF99"/>
    <property type="match status" value="1"/>
</dbReference>
<dbReference type="PIRSF" id="PIRSF006380">
    <property type="entry name" value="UCP006380"/>
    <property type="match status" value="1"/>
</dbReference>
<name>Y1891_SACI6</name>
<proteinExistence type="inferred from homology"/>
<sequence>MPISGVDDGYFPLSYKGGKGKTALVVVTFYDYEMIDLDWGLITVDGNDATDVLKQLRKGDIVILDGVIFAGFNYIVPYSDNMIFFYSKMPKVDLIKNALMKHFQADTERVREILYVLNNLKQIPTKRGNVFLYSTVELSLAKSIIEKYQIYSKIPEVLKSAHVIASSLGRFLARYKKTI</sequence>
<evidence type="ECO:0000255" key="1">
    <source>
        <dbReference type="HAMAP-Rule" id="MF_00582"/>
    </source>
</evidence>
<protein>
    <recommendedName>
        <fullName evidence="1">UPF0215 protein M164_1891</fullName>
    </recommendedName>
</protein>
<feature type="chain" id="PRO_1000212134" description="UPF0215 protein M164_1891">
    <location>
        <begin position="1"/>
        <end position="179"/>
    </location>
</feature>
<organism>
    <name type="scientific">Saccharolobus islandicus (strain M.16.4 / Kamchatka #3)</name>
    <name type="common">Sulfolobus islandicus</name>
    <dbReference type="NCBI Taxonomy" id="426118"/>
    <lineage>
        <taxon>Archaea</taxon>
        <taxon>Thermoproteota</taxon>
        <taxon>Thermoprotei</taxon>
        <taxon>Sulfolobales</taxon>
        <taxon>Sulfolobaceae</taxon>
        <taxon>Saccharolobus</taxon>
    </lineage>
</organism>
<gene>
    <name type="ordered locus">M164_1891</name>
</gene>
<accession>C4KIT0</accession>